<reference key="1">
    <citation type="journal article" date="2010" name="J. Proteome Res.">
        <title>Molecular diversification of peptide toxins from the tarantula Haplopelma hainanum (Ornithoctonus hainana) venom based on transcriptomic, peptidomic, and genomic analyses.</title>
        <authorList>
            <person name="Tang X."/>
            <person name="Zhang Y."/>
            <person name="Hu W."/>
            <person name="Xu D."/>
            <person name="Tao H."/>
            <person name="Yang X."/>
            <person name="Li Y."/>
            <person name="Jiang L."/>
            <person name="Liang S."/>
        </authorList>
    </citation>
    <scope>NUCLEOTIDE SEQUENCE [LARGE SCALE GENOMIC DNA]</scope>
    <source>
        <tissue>Venom gland</tissue>
    </source>
</reference>
<keyword id="KW-1015">Disulfide bond</keyword>
<keyword id="KW-0872">Ion channel impairing toxin</keyword>
<keyword id="KW-0960">Knottin</keyword>
<keyword id="KW-0964">Secreted</keyword>
<keyword id="KW-0732">Signal</keyword>
<keyword id="KW-0800">Toxin</keyword>
<dbReference type="EMBL" id="GU293110">
    <property type="protein sequence ID" value="ADB56926.1"/>
    <property type="molecule type" value="Genomic_DNA"/>
</dbReference>
<dbReference type="SMR" id="D2Y2N3"/>
<dbReference type="ArachnoServer" id="AS002030">
    <property type="toxin name" value="U3-theraphotoxin-Hhn1f"/>
</dbReference>
<dbReference type="GO" id="GO:0005576">
    <property type="term" value="C:extracellular region"/>
    <property type="evidence" value="ECO:0007669"/>
    <property type="project" value="UniProtKB-SubCell"/>
</dbReference>
<dbReference type="GO" id="GO:0008200">
    <property type="term" value="F:ion channel inhibitor activity"/>
    <property type="evidence" value="ECO:0007669"/>
    <property type="project" value="InterPro"/>
</dbReference>
<dbReference type="GO" id="GO:0090729">
    <property type="term" value="F:toxin activity"/>
    <property type="evidence" value="ECO:0007669"/>
    <property type="project" value="UniProtKB-KW"/>
</dbReference>
<dbReference type="InterPro" id="IPR011696">
    <property type="entry name" value="Huwentoxin-1"/>
</dbReference>
<dbReference type="InterPro" id="IPR013140">
    <property type="entry name" value="Huwentoxin_CS1"/>
</dbReference>
<dbReference type="Pfam" id="PF07740">
    <property type="entry name" value="Toxin_12"/>
    <property type="match status" value="1"/>
</dbReference>
<dbReference type="SUPFAM" id="SSF57059">
    <property type="entry name" value="omega toxin-like"/>
    <property type="match status" value="1"/>
</dbReference>
<dbReference type="PROSITE" id="PS60021">
    <property type="entry name" value="HWTX_1"/>
    <property type="match status" value="1"/>
</dbReference>
<name>H8N01_CYRHA</name>
<sequence length="87" mass="10069">MVNMKASMFLTSAGLVLLFVVCYASESEEKEFPKEMLSSIFAVDNDFKQEERDCAGHMRECKEKLCCSGYVCSSRWKWCVLPAPWRR</sequence>
<comment type="function">
    <text evidence="1">Ion channel inhibitor.</text>
</comment>
<comment type="subcellular location">
    <subcellularLocation>
        <location evidence="1">Secreted</location>
    </subcellularLocation>
</comment>
<comment type="tissue specificity">
    <text>Expressed by the venom gland.</text>
</comment>
<comment type="domain">
    <text evidence="1">The presence of a 'disulfide through disulfide knot' structurally defines this protein as a knottin.</text>
</comment>
<comment type="similarity">
    <text evidence="4">Belongs to the neurotoxin 10 (Hwtx-1) family. 51 (Hntx-8) subfamily. Hntx-8 sub-subfamily.</text>
</comment>
<evidence type="ECO:0000250" key="1"/>
<evidence type="ECO:0000250" key="2">
    <source>
        <dbReference type="UniProtKB" id="B3FIS6"/>
    </source>
</evidence>
<evidence type="ECO:0000255" key="3"/>
<evidence type="ECO:0000305" key="4"/>
<feature type="signal peptide" evidence="3">
    <location>
        <begin position="1"/>
        <end position="24"/>
    </location>
</feature>
<feature type="propeptide" id="PRO_0000400641" evidence="1">
    <location>
        <begin position="25"/>
        <end position="52"/>
    </location>
</feature>
<feature type="peptide" id="PRO_0000400642" description="U3-theraphotoxin-Hhn1f">
    <location>
        <begin position="53"/>
        <end position="87"/>
    </location>
</feature>
<feature type="disulfide bond" evidence="2">
    <location>
        <begin position="54"/>
        <end position="67"/>
    </location>
</feature>
<feature type="disulfide bond" evidence="2">
    <location>
        <begin position="61"/>
        <end position="72"/>
    </location>
</feature>
<feature type="disulfide bond" evidence="2">
    <location>
        <begin position="66"/>
        <end position="79"/>
    </location>
</feature>
<proteinExistence type="inferred from homology"/>
<accession>D2Y2N3</accession>
<organism>
    <name type="scientific">Cyriopagopus hainanus</name>
    <name type="common">Chinese bird spider</name>
    <name type="synonym">Haplopelma hainanum</name>
    <dbReference type="NCBI Taxonomy" id="209901"/>
    <lineage>
        <taxon>Eukaryota</taxon>
        <taxon>Metazoa</taxon>
        <taxon>Ecdysozoa</taxon>
        <taxon>Arthropoda</taxon>
        <taxon>Chelicerata</taxon>
        <taxon>Arachnida</taxon>
        <taxon>Araneae</taxon>
        <taxon>Mygalomorphae</taxon>
        <taxon>Theraphosidae</taxon>
        <taxon>Haplopelma</taxon>
    </lineage>
</organism>
<protein>
    <recommendedName>
        <fullName>U3-theraphotoxin-Hhn1f</fullName>
        <shortName>U3-TRTX-Hhn1f</shortName>
    </recommendedName>
    <alternativeName>
        <fullName>Hainantoxin-VIII-14</fullName>
        <shortName>HNTX-VIII-14</shortName>
    </alternativeName>
</protein>